<organism>
    <name type="scientific">Thermotoga sp. (strain RQ2)</name>
    <dbReference type="NCBI Taxonomy" id="126740"/>
    <lineage>
        <taxon>Bacteria</taxon>
        <taxon>Thermotogati</taxon>
        <taxon>Thermotogota</taxon>
        <taxon>Thermotogae</taxon>
        <taxon>Thermotogales</taxon>
        <taxon>Thermotogaceae</taxon>
        <taxon>Thermotoga</taxon>
    </lineage>
</organism>
<dbReference type="EC" id="6.1.1.17" evidence="1"/>
<dbReference type="EMBL" id="CP000969">
    <property type="protein sequence ID" value="ACB09822.1"/>
    <property type="molecule type" value="Genomic_DNA"/>
</dbReference>
<dbReference type="RefSeq" id="WP_012311157.1">
    <property type="nucleotide sequence ID" value="NC_010483.1"/>
</dbReference>
<dbReference type="SMR" id="B1LBX4"/>
<dbReference type="KEGG" id="trq:TRQ2_1478"/>
<dbReference type="HOGENOM" id="CLU_015768_6_3_0"/>
<dbReference type="Proteomes" id="UP000001687">
    <property type="component" value="Chromosome"/>
</dbReference>
<dbReference type="GO" id="GO:0005829">
    <property type="term" value="C:cytosol"/>
    <property type="evidence" value="ECO:0007669"/>
    <property type="project" value="TreeGrafter"/>
</dbReference>
<dbReference type="GO" id="GO:0005524">
    <property type="term" value="F:ATP binding"/>
    <property type="evidence" value="ECO:0007669"/>
    <property type="project" value="UniProtKB-UniRule"/>
</dbReference>
<dbReference type="GO" id="GO:0004818">
    <property type="term" value="F:glutamate-tRNA ligase activity"/>
    <property type="evidence" value="ECO:0007669"/>
    <property type="project" value="UniProtKB-UniRule"/>
</dbReference>
<dbReference type="GO" id="GO:0000049">
    <property type="term" value="F:tRNA binding"/>
    <property type="evidence" value="ECO:0007669"/>
    <property type="project" value="InterPro"/>
</dbReference>
<dbReference type="GO" id="GO:0008270">
    <property type="term" value="F:zinc ion binding"/>
    <property type="evidence" value="ECO:0007669"/>
    <property type="project" value="InterPro"/>
</dbReference>
<dbReference type="GO" id="GO:0006424">
    <property type="term" value="P:glutamyl-tRNA aminoacylation"/>
    <property type="evidence" value="ECO:0007669"/>
    <property type="project" value="UniProtKB-UniRule"/>
</dbReference>
<dbReference type="CDD" id="cd00808">
    <property type="entry name" value="GluRS_core"/>
    <property type="match status" value="1"/>
</dbReference>
<dbReference type="FunFam" id="1.10.8.70:FF:000003">
    <property type="entry name" value="Glutamate--tRNA ligase 1"/>
    <property type="match status" value="1"/>
</dbReference>
<dbReference type="FunFam" id="1.10.1160.10:FF:000003">
    <property type="entry name" value="Glutamate--tRNA ligase 2"/>
    <property type="match status" value="1"/>
</dbReference>
<dbReference type="FunFam" id="3.40.50.620:FF:000045">
    <property type="entry name" value="Glutamate--tRNA ligase, mitochondrial"/>
    <property type="match status" value="1"/>
</dbReference>
<dbReference type="Gene3D" id="1.10.10.350">
    <property type="match status" value="1"/>
</dbReference>
<dbReference type="Gene3D" id="1.10.8.70">
    <property type="entry name" value="Glutamate-tRNA synthetase, class I, anticodon-binding domain 1"/>
    <property type="match status" value="1"/>
</dbReference>
<dbReference type="Gene3D" id="1.10.1160.10">
    <property type="entry name" value="Glutamyl-trna Synthetase, Domain 2"/>
    <property type="match status" value="1"/>
</dbReference>
<dbReference type="Gene3D" id="3.90.800.10">
    <property type="entry name" value="Glutamyl-tRNA Synthetase, Domain 3"/>
    <property type="match status" value="1"/>
</dbReference>
<dbReference type="Gene3D" id="3.40.50.620">
    <property type="entry name" value="HUPs"/>
    <property type="match status" value="1"/>
</dbReference>
<dbReference type="HAMAP" id="MF_00022">
    <property type="entry name" value="Glu_tRNA_synth_type1"/>
    <property type="match status" value="1"/>
</dbReference>
<dbReference type="InterPro" id="IPR045462">
    <property type="entry name" value="aa-tRNA-synth_I_cd-bd"/>
</dbReference>
<dbReference type="InterPro" id="IPR020751">
    <property type="entry name" value="aa-tRNA-synth_I_codon-bd_sub2"/>
</dbReference>
<dbReference type="InterPro" id="IPR001412">
    <property type="entry name" value="aa-tRNA-synth_I_CS"/>
</dbReference>
<dbReference type="InterPro" id="IPR008925">
    <property type="entry name" value="aa_tRNA-synth_I_cd-bd_sf"/>
</dbReference>
<dbReference type="InterPro" id="IPR004527">
    <property type="entry name" value="Glu-tRNA-ligase_bac/mito"/>
</dbReference>
<dbReference type="InterPro" id="IPR020752">
    <property type="entry name" value="Glu-tRNA-synth_I_codon-bd_sub1"/>
</dbReference>
<dbReference type="InterPro" id="IPR000924">
    <property type="entry name" value="Glu/Gln-tRNA-synth"/>
</dbReference>
<dbReference type="InterPro" id="IPR020058">
    <property type="entry name" value="Glu/Gln-tRNA-synth_Ib_cat-dom"/>
</dbReference>
<dbReference type="InterPro" id="IPR020061">
    <property type="entry name" value="Glu_tRNA_lig_a-bdl"/>
</dbReference>
<dbReference type="InterPro" id="IPR049940">
    <property type="entry name" value="GluQ/Sye"/>
</dbReference>
<dbReference type="InterPro" id="IPR033910">
    <property type="entry name" value="GluRS_core"/>
</dbReference>
<dbReference type="InterPro" id="IPR014729">
    <property type="entry name" value="Rossmann-like_a/b/a_fold"/>
</dbReference>
<dbReference type="NCBIfam" id="TIGR00464">
    <property type="entry name" value="gltX_bact"/>
    <property type="match status" value="1"/>
</dbReference>
<dbReference type="PANTHER" id="PTHR43311">
    <property type="entry name" value="GLUTAMATE--TRNA LIGASE"/>
    <property type="match status" value="1"/>
</dbReference>
<dbReference type="PANTHER" id="PTHR43311:SF2">
    <property type="entry name" value="GLUTAMATE--TRNA LIGASE, MITOCHONDRIAL-RELATED"/>
    <property type="match status" value="1"/>
</dbReference>
<dbReference type="Pfam" id="PF19269">
    <property type="entry name" value="Anticodon_2"/>
    <property type="match status" value="1"/>
</dbReference>
<dbReference type="Pfam" id="PF00749">
    <property type="entry name" value="tRNA-synt_1c"/>
    <property type="match status" value="1"/>
</dbReference>
<dbReference type="PRINTS" id="PR00987">
    <property type="entry name" value="TRNASYNTHGLU"/>
</dbReference>
<dbReference type="SUPFAM" id="SSF48163">
    <property type="entry name" value="An anticodon-binding domain of class I aminoacyl-tRNA synthetases"/>
    <property type="match status" value="1"/>
</dbReference>
<dbReference type="SUPFAM" id="SSF52374">
    <property type="entry name" value="Nucleotidylyl transferase"/>
    <property type="match status" value="1"/>
</dbReference>
<dbReference type="PROSITE" id="PS00178">
    <property type="entry name" value="AA_TRNA_LIGASE_I"/>
    <property type="match status" value="1"/>
</dbReference>
<feature type="chain" id="PRO_0000367793" description="Glutamate--tRNA ligase 2">
    <location>
        <begin position="1"/>
        <end position="469"/>
    </location>
</feature>
<feature type="short sequence motif" description="'HIGH' region" evidence="1">
    <location>
        <begin position="8"/>
        <end position="18"/>
    </location>
</feature>
<feature type="short sequence motif" description="'KMSKS' region" evidence="1">
    <location>
        <begin position="250"/>
        <end position="254"/>
    </location>
</feature>
<feature type="binding site" evidence="1">
    <location>
        <position position="253"/>
    </location>
    <ligand>
        <name>ATP</name>
        <dbReference type="ChEBI" id="CHEBI:30616"/>
    </ligand>
</feature>
<name>SYE2_THESQ</name>
<reference key="1">
    <citation type="journal article" date="2011" name="J. Bacteriol.">
        <title>Genome sequence of Thermotoga sp. strain RQ2, a hyperthermophilic bacterium isolated from a geothermally heated region of the seafloor near Ribeira Quente, the Azores.</title>
        <authorList>
            <person name="Swithers K.S."/>
            <person name="DiPippo J.L."/>
            <person name="Bruce D.C."/>
            <person name="Detter C."/>
            <person name="Tapia R."/>
            <person name="Han S."/>
            <person name="Saunders E."/>
            <person name="Goodwin L.A."/>
            <person name="Han J."/>
            <person name="Woyke T."/>
            <person name="Pitluck S."/>
            <person name="Pennacchio L."/>
            <person name="Nolan M."/>
            <person name="Mikhailova N."/>
            <person name="Lykidis A."/>
            <person name="Land M.L."/>
            <person name="Brettin T."/>
            <person name="Stetter K.O."/>
            <person name="Nelson K.E."/>
            <person name="Gogarten J.P."/>
            <person name="Noll K.M."/>
        </authorList>
    </citation>
    <scope>NUCLEOTIDE SEQUENCE [LARGE SCALE GENOMIC DNA]</scope>
    <source>
        <strain>RQ2</strain>
    </source>
</reference>
<evidence type="ECO:0000255" key="1">
    <source>
        <dbReference type="HAMAP-Rule" id="MF_00022"/>
    </source>
</evidence>
<proteinExistence type="inferred from homology"/>
<accession>B1LBX4</accession>
<keyword id="KW-0030">Aminoacyl-tRNA synthetase</keyword>
<keyword id="KW-0067">ATP-binding</keyword>
<keyword id="KW-0963">Cytoplasm</keyword>
<keyword id="KW-0436">Ligase</keyword>
<keyword id="KW-0547">Nucleotide-binding</keyword>
<keyword id="KW-0648">Protein biosynthesis</keyword>
<gene>
    <name evidence="1" type="primary">gltX2</name>
    <name type="ordered locus">TRQ2_1478</name>
</gene>
<comment type="function">
    <text evidence="1">Catalyzes the attachment of glutamate to tRNA(Glu) in a two-step reaction: glutamate is first activated by ATP to form Glu-AMP and then transferred to the acceptor end of tRNA(Glu).</text>
</comment>
<comment type="catalytic activity">
    <reaction evidence="1">
        <text>tRNA(Glu) + L-glutamate + ATP = L-glutamyl-tRNA(Glu) + AMP + diphosphate</text>
        <dbReference type="Rhea" id="RHEA:23540"/>
        <dbReference type="Rhea" id="RHEA-COMP:9663"/>
        <dbReference type="Rhea" id="RHEA-COMP:9680"/>
        <dbReference type="ChEBI" id="CHEBI:29985"/>
        <dbReference type="ChEBI" id="CHEBI:30616"/>
        <dbReference type="ChEBI" id="CHEBI:33019"/>
        <dbReference type="ChEBI" id="CHEBI:78442"/>
        <dbReference type="ChEBI" id="CHEBI:78520"/>
        <dbReference type="ChEBI" id="CHEBI:456215"/>
        <dbReference type="EC" id="6.1.1.17"/>
    </reaction>
</comment>
<comment type="subunit">
    <text evidence="1">Monomer.</text>
</comment>
<comment type="subcellular location">
    <subcellularLocation>
        <location evidence="1">Cytoplasm</location>
    </subcellularLocation>
</comment>
<comment type="similarity">
    <text evidence="1">Belongs to the class-I aminoacyl-tRNA synthetase family. Glutamate--tRNA ligase type 1 subfamily.</text>
</comment>
<protein>
    <recommendedName>
        <fullName evidence="1">Glutamate--tRNA ligase 2</fullName>
        <ecNumber evidence="1">6.1.1.17</ecNumber>
    </recommendedName>
    <alternativeName>
        <fullName evidence="1">Glutamyl-tRNA synthetase 2</fullName>
        <shortName evidence="1">GluRS 2</shortName>
    </alternativeName>
</protein>
<sequence length="469" mass="54582">MVRVRFAPSPTGFLHVGGARTALFNFLFARKEKGKFILRIEDTDLERSEREYEEKLMESLRWLGLLWDEGPDVGGDHGPYMQSERVEIYREHAERLVKEGKAYYVYAYPEEIEEMREKLLSEGKAPHYSQEMFEKFDTPERRREYEEKGLRPAVFFKMPRKDYVLNDVVKGEVVFKTGAIGDFVIMRSNGLPTYNFACVVDDMLMEITHVIRGDDHLSNTLRQLALYEAFEKAPPVFAHVSTILGPDGKKLSKRHGATSVEAFRDMGYLPEALVNYLALLGWSHPEGKELLTLEELISSFSLDRLSPNPAIFDPQKLKWMNGYYLRNMPIEKLAELAKPFFEKAGIKIIDEEYFKKVLEITKERVEVLSEFPEESRFFFEDPAPVEIPEEMKEVFSQLKEELQNVRWTMEEITPVFKKVLKQHGVKPKEFYMTLRRVLTGREEGPELVNIIPLLGKEIFLRRIERSLGG</sequence>